<proteinExistence type="uncertain"/>
<dbReference type="EMBL" id="AK093435">
    <property type="protein sequence ID" value="BAC04163.1"/>
    <property type="molecule type" value="mRNA"/>
</dbReference>
<dbReference type="GlyGen" id="Q8N9X3">
    <property type="glycosylation" value="2 sites, 1 N-linked glycan (1 site)"/>
</dbReference>
<dbReference type="BioMuta" id="HGNC:50587"/>
<dbReference type="DMDM" id="74729786"/>
<dbReference type="AGR" id="HGNC:50587"/>
<dbReference type="GeneCards" id="LINC01356"/>
<dbReference type="HGNC" id="HGNC:50587">
    <property type="gene designation" value="LINC01356"/>
</dbReference>
<dbReference type="neXtProt" id="NX_Q8N9X3"/>
<dbReference type="InParanoid" id="Q8N9X3"/>
<dbReference type="PAN-GO" id="Q8N9X3">
    <property type="GO annotations" value="0 GO annotations based on evolutionary models"/>
</dbReference>
<dbReference type="ChiTaRS" id="LINC01356">
    <property type="organism name" value="human"/>
</dbReference>
<dbReference type="Pharos" id="Q8N9X3">
    <property type="development level" value="Tdark"/>
</dbReference>
<dbReference type="Proteomes" id="UP000005640">
    <property type="component" value="Unplaced"/>
</dbReference>
<dbReference type="RNAct" id="Q8N9X3">
    <property type="molecule type" value="protein"/>
</dbReference>
<keyword id="KW-1185">Reference proteome</keyword>
<reference key="1">
    <citation type="journal article" date="2004" name="Nat. Genet.">
        <title>Complete sequencing and characterization of 21,243 full-length human cDNAs.</title>
        <authorList>
            <person name="Ota T."/>
            <person name="Suzuki Y."/>
            <person name="Nishikawa T."/>
            <person name="Otsuki T."/>
            <person name="Sugiyama T."/>
            <person name="Irie R."/>
            <person name="Wakamatsu A."/>
            <person name="Hayashi K."/>
            <person name="Sato H."/>
            <person name="Nagai K."/>
            <person name="Kimura K."/>
            <person name="Makita H."/>
            <person name="Sekine M."/>
            <person name="Obayashi M."/>
            <person name="Nishi T."/>
            <person name="Shibahara T."/>
            <person name="Tanaka T."/>
            <person name="Ishii S."/>
            <person name="Yamamoto J."/>
            <person name="Saito K."/>
            <person name="Kawai Y."/>
            <person name="Isono Y."/>
            <person name="Nakamura Y."/>
            <person name="Nagahari K."/>
            <person name="Murakami K."/>
            <person name="Yasuda T."/>
            <person name="Iwayanagi T."/>
            <person name="Wagatsuma M."/>
            <person name="Shiratori A."/>
            <person name="Sudo H."/>
            <person name="Hosoiri T."/>
            <person name="Kaku Y."/>
            <person name="Kodaira H."/>
            <person name="Kondo H."/>
            <person name="Sugawara M."/>
            <person name="Takahashi M."/>
            <person name="Kanda K."/>
            <person name="Yokoi T."/>
            <person name="Furuya T."/>
            <person name="Kikkawa E."/>
            <person name="Omura Y."/>
            <person name="Abe K."/>
            <person name="Kamihara K."/>
            <person name="Katsuta N."/>
            <person name="Sato K."/>
            <person name="Tanikawa M."/>
            <person name="Yamazaki M."/>
            <person name="Ninomiya K."/>
            <person name="Ishibashi T."/>
            <person name="Yamashita H."/>
            <person name="Murakawa K."/>
            <person name="Fujimori K."/>
            <person name="Tanai H."/>
            <person name="Kimata M."/>
            <person name="Watanabe M."/>
            <person name="Hiraoka S."/>
            <person name="Chiba Y."/>
            <person name="Ishida S."/>
            <person name="Ono Y."/>
            <person name="Takiguchi S."/>
            <person name="Watanabe S."/>
            <person name="Yosida M."/>
            <person name="Hotuta T."/>
            <person name="Kusano J."/>
            <person name="Kanehori K."/>
            <person name="Takahashi-Fujii A."/>
            <person name="Hara H."/>
            <person name="Tanase T.-O."/>
            <person name="Nomura Y."/>
            <person name="Togiya S."/>
            <person name="Komai F."/>
            <person name="Hara R."/>
            <person name="Takeuchi K."/>
            <person name="Arita M."/>
            <person name="Imose N."/>
            <person name="Musashino K."/>
            <person name="Yuuki H."/>
            <person name="Oshima A."/>
            <person name="Sasaki N."/>
            <person name="Aotsuka S."/>
            <person name="Yoshikawa Y."/>
            <person name="Matsunawa H."/>
            <person name="Ichihara T."/>
            <person name="Shiohata N."/>
            <person name="Sano S."/>
            <person name="Moriya S."/>
            <person name="Momiyama H."/>
            <person name="Satoh N."/>
            <person name="Takami S."/>
            <person name="Terashima Y."/>
            <person name="Suzuki O."/>
            <person name="Nakagawa S."/>
            <person name="Senoh A."/>
            <person name="Mizoguchi H."/>
            <person name="Goto Y."/>
            <person name="Shimizu F."/>
            <person name="Wakebe H."/>
            <person name="Hishigaki H."/>
            <person name="Watanabe T."/>
            <person name="Sugiyama A."/>
            <person name="Takemoto M."/>
            <person name="Kawakami B."/>
            <person name="Yamazaki M."/>
            <person name="Watanabe K."/>
            <person name="Kumagai A."/>
            <person name="Itakura S."/>
            <person name="Fukuzumi Y."/>
            <person name="Fujimori Y."/>
            <person name="Komiyama M."/>
            <person name="Tashiro H."/>
            <person name="Tanigami A."/>
            <person name="Fujiwara T."/>
            <person name="Ono T."/>
            <person name="Yamada K."/>
            <person name="Fujii Y."/>
            <person name="Ozaki K."/>
            <person name="Hirao M."/>
            <person name="Ohmori Y."/>
            <person name="Kawabata A."/>
            <person name="Hikiji T."/>
            <person name="Kobatake N."/>
            <person name="Inagaki H."/>
            <person name="Ikema Y."/>
            <person name="Okamoto S."/>
            <person name="Okitani R."/>
            <person name="Kawakami T."/>
            <person name="Noguchi S."/>
            <person name="Itoh T."/>
            <person name="Shigeta K."/>
            <person name="Senba T."/>
            <person name="Matsumura K."/>
            <person name="Nakajima Y."/>
            <person name="Mizuno T."/>
            <person name="Morinaga M."/>
            <person name="Sasaki M."/>
            <person name="Togashi T."/>
            <person name="Oyama M."/>
            <person name="Hata H."/>
            <person name="Watanabe M."/>
            <person name="Komatsu T."/>
            <person name="Mizushima-Sugano J."/>
            <person name="Satoh T."/>
            <person name="Shirai Y."/>
            <person name="Takahashi Y."/>
            <person name="Nakagawa K."/>
            <person name="Okumura K."/>
            <person name="Nagase T."/>
            <person name="Nomura N."/>
            <person name="Kikuchi H."/>
            <person name="Masuho Y."/>
            <person name="Yamashita R."/>
            <person name="Nakai K."/>
            <person name="Yada T."/>
            <person name="Nakamura Y."/>
            <person name="Ohara O."/>
            <person name="Isogai T."/>
            <person name="Sugano S."/>
        </authorList>
    </citation>
    <scope>NUCLEOTIDE SEQUENCE [LARGE SCALE MRNA]</scope>
    <source>
        <tissue>Testis</tissue>
    </source>
</reference>
<feature type="chain" id="PRO_0000339298" description="Putative uncharacterized protein encoded by LINC01356">
    <location>
        <begin position="1"/>
        <end position="169"/>
    </location>
</feature>
<feature type="region of interest" description="Disordered" evidence="1">
    <location>
        <begin position="32"/>
        <end position="53"/>
    </location>
</feature>
<feature type="region of interest" description="Disordered" evidence="1">
    <location>
        <begin position="148"/>
        <end position="169"/>
    </location>
</feature>
<gene>
    <name evidence="3" type="primary">LINC01356</name>
</gene>
<comment type="caution">
    <text evidence="2">Product of a dubious CDS prediction. May be a non-coding RNA.</text>
</comment>
<evidence type="ECO:0000256" key="1">
    <source>
        <dbReference type="SAM" id="MobiDB-lite"/>
    </source>
</evidence>
<evidence type="ECO:0000305" key="2"/>
<evidence type="ECO:0000312" key="3">
    <source>
        <dbReference type="HGNC" id="HGNC:50587"/>
    </source>
</evidence>
<accession>Q8N9X3</accession>
<name>YA026_HUMAN</name>
<sequence>MSLRGRFYYCRHFRGRKQARRVGELPEVTELVSGPDWNPNTSQPMPGSPAPAPRRLPGCQRHPHPFKCCPVPAPQSLPSTTRPHLPPTPQGQASRWLFLFLFQKLRGETDVCVPDACRWRRRSRETRGENQSVRAAVRSPDQAFHALVSGSRGREGRLRPQCAGSAGGA</sequence>
<protein>
    <recommendedName>
        <fullName evidence="2">Putative uncharacterized protein encoded by LINC01356</fullName>
    </recommendedName>
</protein>
<organism>
    <name type="scientific">Homo sapiens</name>
    <name type="common">Human</name>
    <dbReference type="NCBI Taxonomy" id="9606"/>
    <lineage>
        <taxon>Eukaryota</taxon>
        <taxon>Metazoa</taxon>
        <taxon>Chordata</taxon>
        <taxon>Craniata</taxon>
        <taxon>Vertebrata</taxon>
        <taxon>Euteleostomi</taxon>
        <taxon>Mammalia</taxon>
        <taxon>Eutheria</taxon>
        <taxon>Euarchontoglires</taxon>
        <taxon>Primates</taxon>
        <taxon>Haplorrhini</taxon>
        <taxon>Catarrhini</taxon>
        <taxon>Hominidae</taxon>
        <taxon>Homo</taxon>
    </lineage>
</organism>